<name>XPT_PSEA8</name>
<sequence>MDILKDKIRSEGIVLSEHVLKVDAFLNHQIDPQLMQQVGHAFAMRFRDQGITKIVTIEASGIAPAVMAGLELGVPVIFARKYQSLTLKDNLYISKVFSFTKQTESTIAISAKHLNAHDHVLVIDDFLANGHAAKALIDLIGQAGASIAGLGIVIEKSFQDGRALLESEGYRVESLARVKSLAGGQVEFLD</sequence>
<feature type="chain" id="PRO_1000138242" description="Xanthine phosphoribosyltransferase">
    <location>
        <begin position="1"/>
        <end position="190"/>
    </location>
</feature>
<feature type="binding site" evidence="1">
    <location>
        <position position="20"/>
    </location>
    <ligand>
        <name>xanthine</name>
        <dbReference type="ChEBI" id="CHEBI:17712"/>
    </ligand>
</feature>
<feature type="binding site" evidence="1">
    <location>
        <position position="27"/>
    </location>
    <ligand>
        <name>xanthine</name>
        <dbReference type="ChEBI" id="CHEBI:17712"/>
    </ligand>
</feature>
<feature type="binding site" evidence="1">
    <location>
        <begin position="128"/>
        <end position="132"/>
    </location>
    <ligand>
        <name>5-phospho-alpha-D-ribose 1-diphosphate</name>
        <dbReference type="ChEBI" id="CHEBI:58017"/>
    </ligand>
</feature>
<feature type="binding site" evidence="1">
    <location>
        <position position="156"/>
    </location>
    <ligand>
        <name>xanthine</name>
        <dbReference type="ChEBI" id="CHEBI:17712"/>
    </ligand>
</feature>
<keyword id="KW-0963">Cytoplasm</keyword>
<keyword id="KW-0328">Glycosyltransferase</keyword>
<keyword id="KW-0660">Purine salvage</keyword>
<keyword id="KW-0808">Transferase</keyword>
<dbReference type="EC" id="2.4.2.22" evidence="1"/>
<dbReference type="EMBL" id="FM209186">
    <property type="protein sequence ID" value="CAW30447.1"/>
    <property type="molecule type" value="Genomic_DNA"/>
</dbReference>
<dbReference type="RefSeq" id="WP_003096508.1">
    <property type="nucleotide sequence ID" value="NC_011770.1"/>
</dbReference>
<dbReference type="SMR" id="B7V5I9"/>
<dbReference type="KEGG" id="pag:PLES_56931"/>
<dbReference type="HOGENOM" id="CLU_099015_0_0_6"/>
<dbReference type="UniPathway" id="UPA00602">
    <property type="reaction ID" value="UER00658"/>
</dbReference>
<dbReference type="GO" id="GO:0005737">
    <property type="term" value="C:cytoplasm"/>
    <property type="evidence" value="ECO:0007669"/>
    <property type="project" value="UniProtKB-SubCell"/>
</dbReference>
<dbReference type="GO" id="GO:0000310">
    <property type="term" value="F:xanthine phosphoribosyltransferase activity"/>
    <property type="evidence" value="ECO:0007669"/>
    <property type="project" value="UniProtKB-UniRule"/>
</dbReference>
<dbReference type="GO" id="GO:0006166">
    <property type="term" value="P:purine ribonucleoside salvage"/>
    <property type="evidence" value="ECO:0007669"/>
    <property type="project" value="UniProtKB-KW"/>
</dbReference>
<dbReference type="GO" id="GO:0046110">
    <property type="term" value="P:xanthine metabolic process"/>
    <property type="evidence" value="ECO:0007669"/>
    <property type="project" value="InterPro"/>
</dbReference>
<dbReference type="GO" id="GO:0032265">
    <property type="term" value="P:XMP salvage"/>
    <property type="evidence" value="ECO:0007669"/>
    <property type="project" value="UniProtKB-UniRule"/>
</dbReference>
<dbReference type="CDD" id="cd06223">
    <property type="entry name" value="PRTases_typeI"/>
    <property type="match status" value="1"/>
</dbReference>
<dbReference type="FunFam" id="3.40.50.2020:FF:000027">
    <property type="entry name" value="Xanthine phosphoribosyltransferase"/>
    <property type="match status" value="1"/>
</dbReference>
<dbReference type="Gene3D" id="3.40.50.2020">
    <property type="match status" value="1"/>
</dbReference>
<dbReference type="HAMAP" id="MF_01184">
    <property type="entry name" value="XPRTase"/>
    <property type="match status" value="1"/>
</dbReference>
<dbReference type="InterPro" id="IPR000836">
    <property type="entry name" value="PRibTrfase_dom"/>
</dbReference>
<dbReference type="InterPro" id="IPR029057">
    <property type="entry name" value="PRTase-like"/>
</dbReference>
<dbReference type="InterPro" id="IPR050118">
    <property type="entry name" value="Pur/Pyrimidine_PRTase"/>
</dbReference>
<dbReference type="InterPro" id="IPR010079">
    <property type="entry name" value="Xanthine_PRibTrfase"/>
</dbReference>
<dbReference type="NCBIfam" id="NF006671">
    <property type="entry name" value="PRK09219.1"/>
    <property type="match status" value="1"/>
</dbReference>
<dbReference type="NCBIfam" id="TIGR01744">
    <property type="entry name" value="XPRTase"/>
    <property type="match status" value="1"/>
</dbReference>
<dbReference type="PANTHER" id="PTHR43864">
    <property type="entry name" value="HYPOXANTHINE/GUANINE PHOSPHORIBOSYLTRANSFERASE"/>
    <property type="match status" value="1"/>
</dbReference>
<dbReference type="PANTHER" id="PTHR43864:SF1">
    <property type="entry name" value="XANTHINE PHOSPHORIBOSYLTRANSFERASE"/>
    <property type="match status" value="1"/>
</dbReference>
<dbReference type="Pfam" id="PF00156">
    <property type="entry name" value="Pribosyltran"/>
    <property type="match status" value="1"/>
</dbReference>
<dbReference type="SUPFAM" id="SSF53271">
    <property type="entry name" value="PRTase-like"/>
    <property type="match status" value="1"/>
</dbReference>
<evidence type="ECO:0000255" key="1">
    <source>
        <dbReference type="HAMAP-Rule" id="MF_01184"/>
    </source>
</evidence>
<reference key="1">
    <citation type="journal article" date="2009" name="Genome Res.">
        <title>Newly introduced genomic prophage islands are critical determinants of in vivo competitiveness in the Liverpool epidemic strain of Pseudomonas aeruginosa.</title>
        <authorList>
            <person name="Winstanley C."/>
            <person name="Langille M.G.I."/>
            <person name="Fothergill J.L."/>
            <person name="Kukavica-Ibrulj I."/>
            <person name="Paradis-Bleau C."/>
            <person name="Sanschagrin F."/>
            <person name="Thomson N.R."/>
            <person name="Winsor G.L."/>
            <person name="Quail M.A."/>
            <person name="Lennard N."/>
            <person name="Bignell A."/>
            <person name="Clarke L."/>
            <person name="Seeger K."/>
            <person name="Saunders D."/>
            <person name="Harris D."/>
            <person name="Parkhill J."/>
            <person name="Hancock R.E.W."/>
            <person name="Brinkman F.S.L."/>
            <person name="Levesque R.C."/>
        </authorList>
    </citation>
    <scope>NUCLEOTIDE SEQUENCE [LARGE SCALE GENOMIC DNA]</scope>
    <source>
        <strain>LESB58</strain>
    </source>
</reference>
<accession>B7V5I9</accession>
<protein>
    <recommendedName>
        <fullName evidence="1">Xanthine phosphoribosyltransferase</fullName>
        <shortName evidence="1">XPRTase</shortName>
        <ecNumber evidence="1">2.4.2.22</ecNumber>
    </recommendedName>
</protein>
<comment type="function">
    <text evidence="1">Converts the preformed base xanthine, a product of nucleic acid breakdown, to xanthosine 5'-monophosphate (XMP), so it can be reused for RNA or DNA synthesis.</text>
</comment>
<comment type="catalytic activity">
    <reaction evidence="1">
        <text>XMP + diphosphate = xanthine + 5-phospho-alpha-D-ribose 1-diphosphate</text>
        <dbReference type="Rhea" id="RHEA:10800"/>
        <dbReference type="ChEBI" id="CHEBI:17712"/>
        <dbReference type="ChEBI" id="CHEBI:33019"/>
        <dbReference type="ChEBI" id="CHEBI:57464"/>
        <dbReference type="ChEBI" id="CHEBI:58017"/>
        <dbReference type="EC" id="2.4.2.22"/>
    </reaction>
</comment>
<comment type="pathway">
    <text evidence="1">Purine metabolism; XMP biosynthesis via salvage pathway; XMP from xanthine: step 1/1.</text>
</comment>
<comment type="subunit">
    <text evidence="1">Homodimer.</text>
</comment>
<comment type="subcellular location">
    <subcellularLocation>
        <location evidence="1">Cytoplasm</location>
    </subcellularLocation>
</comment>
<comment type="similarity">
    <text evidence="1">Belongs to the purine/pyrimidine phosphoribosyltransferase family. Xpt subfamily.</text>
</comment>
<gene>
    <name evidence="1" type="primary">xpt</name>
    <name type="ordered locus">PLES_56931</name>
</gene>
<proteinExistence type="inferred from homology"/>
<organism>
    <name type="scientific">Pseudomonas aeruginosa (strain LESB58)</name>
    <dbReference type="NCBI Taxonomy" id="557722"/>
    <lineage>
        <taxon>Bacteria</taxon>
        <taxon>Pseudomonadati</taxon>
        <taxon>Pseudomonadota</taxon>
        <taxon>Gammaproteobacteria</taxon>
        <taxon>Pseudomonadales</taxon>
        <taxon>Pseudomonadaceae</taxon>
        <taxon>Pseudomonas</taxon>
    </lineage>
</organism>